<feature type="chain" id="PRO_1000086525" description="Large ribosomal subunit protein uL4">
    <location>
        <begin position="1"/>
        <end position="201"/>
    </location>
</feature>
<feature type="region of interest" description="Disordered" evidence="2">
    <location>
        <begin position="39"/>
        <end position="67"/>
    </location>
</feature>
<reference key="1">
    <citation type="submission" date="2007-06" db="EMBL/GenBank/DDBJ databases">
        <title>Complete sequence of Marinomonas sp. MWYL1.</title>
        <authorList>
            <consortium name="US DOE Joint Genome Institute"/>
            <person name="Copeland A."/>
            <person name="Lucas S."/>
            <person name="Lapidus A."/>
            <person name="Barry K."/>
            <person name="Glavina del Rio T."/>
            <person name="Dalin E."/>
            <person name="Tice H."/>
            <person name="Pitluck S."/>
            <person name="Kiss H."/>
            <person name="Brettin T."/>
            <person name="Bruce D."/>
            <person name="Detter J.C."/>
            <person name="Han C."/>
            <person name="Schmutz J."/>
            <person name="Larimer F."/>
            <person name="Land M."/>
            <person name="Hauser L."/>
            <person name="Kyrpides N."/>
            <person name="Kim E."/>
            <person name="Johnston A.W.B."/>
            <person name="Todd J.D."/>
            <person name="Rogers R."/>
            <person name="Wexler M."/>
            <person name="Bond P.L."/>
            <person name="Li Y."/>
            <person name="Richardson P."/>
        </authorList>
    </citation>
    <scope>NUCLEOTIDE SEQUENCE [LARGE SCALE GENOMIC DNA]</scope>
    <source>
        <strain>MWYL1</strain>
    </source>
</reference>
<evidence type="ECO:0000255" key="1">
    <source>
        <dbReference type="HAMAP-Rule" id="MF_01328"/>
    </source>
</evidence>
<evidence type="ECO:0000256" key="2">
    <source>
        <dbReference type="SAM" id="MobiDB-lite"/>
    </source>
</evidence>
<evidence type="ECO:0000305" key="3"/>
<sequence>MNLNLTGAEGTVEVSDVAFAREYNEALVHQVVTSYLAGARQGSRAQKTRSEVAGGGRKPWKQKGSGRARAGTIRSPLWRSGGVTFAAKPQDHSQKVNKKMYRAAMRTIWSELVRQDRLVVVEDLKLEAPKTKLFIAKMAELNIENALIVSHDLDDNLFLAARNIPNVDVRDAASIDPVSLIAYDKVLVTVGALKQVEEALA</sequence>
<proteinExistence type="inferred from homology"/>
<protein>
    <recommendedName>
        <fullName evidence="1">Large ribosomal subunit protein uL4</fullName>
    </recommendedName>
    <alternativeName>
        <fullName evidence="3">50S ribosomal protein L4</fullName>
    </alternativeName>
</protein>
<comment type="function">
    <text evidence="1">One of the primary rRNA binding proteins, this protein initially binds near the 5'-end of the 23S rRNA. It is important during the early stages of 50S assembly. It makes multiple contacts with different domains of the 23S rRNA in the assembled 50S subunit and ribosome.</text>
</comment>
<comment type="function">
    <text evidence="1">Forms part of the polypeptide exit tunnel.</text>
</comment>
<comment type="subunit">
    <text evidence="1">Part of the 50S ribosomal subunit.</text>
</comment>
<comment type="similarity">
    <text evidence="1">Belongs to the universal ribosomal protein uL4 family.</text>
</comment>
<accession>A6W391</accession>
<keyword id="KW-0687">Ribonucleoprotein</keyword>
<keyword id="KW-0689">Ribosomal protein</keyword>
<keyword id="KW-0694">RNA-binding</keyword>
<keyword id="KW-0699">rRNA-binding</keyword>
<dbReference type="EMBL" id="CP000749">
    <property type="protein sequence ID" value="ABR73170.1"/>
    <property type="molecule type" value="Genomic_DNA"/>
</dbReference>
<dbReference type="SMR" id="A6W391"/>
<dbReference type="STRING" id="400668.Mmwyl1_4275"/>
<dbReference type="KEGG" id="mmw:Mmwyl1_4275"/>
<dbReference type="eggNOG" id="COG0088">
    <property type="taxonomic scope" value="Bacteria"/>
</dbReference>
<dbReference type="HOGENOM" id="CLU_041575_5_2_6"/>
<dbReference type="OrthoDB" id="9803201at2"/>
<dbReference type="GO" id="GO:1990904">
    <property type="term" value="C:ribonucleoprotein complex"/>
    <property type="evidence" value="ECO:0007669"/>
    <property type="project" value="UniProtKB-KW"/>
</dbReference>
<dbReference type="GO" id="GO:0005840">
    <property type="term" value="C:ribosome"/>
    <property type="evidence" value="ECO:0007669"/>
    <property type="project" value="UniProtKB-KW"/>
</dbReference>
<dbReference type="GO" id="GO:0019843">
    <property type="term" value="F:rRNA binding"/>
    <property type="evidence" value="ECO:0007669"/>
    <property type="project" value="UniProtKB-UniRule"/>
</dbReference>
<dbReference type="GO" id="GO:0003735">
    <property type="term" value="F:structural constituent of ribosome"/>
    <property type="evidence" value="ECO:0007669"/>
    <property type="project" value="InterPro"/>
</dbReference>
<dbReference type="GO" id="GO:0006412">
    <property type="term" value="P:translation"/>
    <property type="evidence" value="ECO:0007669"/>
    <property type="project" value="UniProtKB-UniRule"/>
</dbReference>
<dbReference type="FunFam" id="3.40.1370.10:FF:000001">
    <property type="entry name" value="50S ribosomal protein L4"/>
    <property type="match status" value="1"/>
</dbReference>
<dbReference type="Gene3D" id="3.40.1370.10">
    <property type="match status" value="1"/>
</dbReference>
<dbReference type="HAMAP" id="MF_01328_B">
    <property type="entry name" value="Ribosomal_uL4_B"/>
    <property type="match status" value="1"/>
</dbReference>
<dbReference type="InterPro" id="IPR002136">
    <property type="entry name" value="Ribosomal_uL4"/>
</dbReference>
<dbReference type="InterPro" id="IPR013005">
    <property type="entry name" value="Ribosomal_uL4-like"/>
</dbReference>
<dbReference type="InterPro" id="IPR023574">
    <property type="entry name" value="Ribosomal_uL4_dom_sf"/>
</dbReference>
<dbReference type="NCBIfam" id="TIGR03953">
    <property type="entry name" value="rplD_bact"/>
    <property type="match status" value="1"/>
</dbReference>
<dbReference type="PANTHER" id="PTHR10746">
    <property type="entry name" value="50S RIBOSOMAL PROTEIN L4"/>
    <property type="match status" value="1"/>
</dbReference>
<dbReference type="PANTHER" id="PTHR10746:SF6">
    <property type="entry name" value="LARGE RIBOSOMAL SUBUNIT PROTEIN UL4M"/>
    <property type="match status" value="1"/>
</dbReference>
<dbReference type="Pfam" id="PF00573">
    <property type="entry name" value="Ribosomal_L4"/>
    <property type="match status" value="1"/>
</dbReference>
<dbReference type="SUPFAM" id="SSF52166">
    <property type="entry name" value="Ribosomal protein L4"/>
    <property type="match status" value="1"/>
</dbReference>
<name>RL4_MARMS</name>
<gene>
    <name evidence="1" type="primary">rplD</name>
    <name type="ordered locus">Mmwyl1_4275</name>
</gene>
<organism>
    <name type="scientific">Marinomonas sp. (strain MWYL1)</name>
    <dbReference type="NCBI Taxonomy" id="400668"/>
    <lineage>
        <taxon>Bacteria</taxon>
        <taxon>Pseudomonadati</taxon>
        <taxon>Pseudomonadota</taxon>
        <taxon>Gammaproteobacteria</taxon>
        <taxon>Oceanospirillales</taxon>
        <taxon>Oceanospirillaceae</taxon>
        <taxon>Marinomonas</taxon>
    </lineage>
</organism>